<comment type="subcellular location">
    <subcellularLocation>
        <location evidence="6">Spore wall</location>
    </subcellularLocation>
    <text>Probably localized either on the surface of the outer spore membrane and/or in the inner spore coat.</text>
</comment>
<comment type="developmental stage">
    <text>Expressed in the mother cell compartment from T2 of sporulation.</text>
</comment>
<comment type="domain">
    <text>LysM domains are thought to be involved in peptidoglycan binding.</text>
</comment>
<comment type="disruption phenotype">
    <text evidence="3 4">According to PubMed:11011148, cells show no effect vegetative growth, spore resistance to heat, chloroform and lysozyme, or spore germination in the presence of L-alanine. According to PubMed:12177332, cells have no detectable alteration in either dormant or germinating spore peptidoglycan, and germinate normally.</text>
</comment>
<comment type="miscellaneous">
    <text>Transcription of ydhD is dependent on SigE.</text>
</comment>
<comment type="miscellaneous">
    <text>Cells producing excessive ydhD do not show impaired spore resistance, but their germination properties change: spores show reduced response to L-alanine and some of them germinate even without germinants.</text>
</comment>
<comment type="similarity">
    <text evidence="5">Belongs to the glycosyl hydrolase 18 family. Chitinase class II subfamily.</text>
</comment>
<comment type="sequence caution" evidence="5">
    <conflict type="frameshift">
        <sequence resource="EMBL-CDS" id="BAA19695"/>
    </conflict>
</comment>
<protein>
    <recommendedName>
        <fullName>Putative sporulation-specific glycosylase YdhD</fullName>
        <ecNumber>3.2.-.-</ecNumber>
    </recommendedName>
</protein>
<sequence>MFIHIVGPGDSLFSIGRRYGASVDQIRGVNGLDETNIVPGQALLIPLYVYTVQPRDTLTAIAAKAFVPLERLRAANPGISPNALQAGAKITIPSISNYIAGTLSFYVLRNPDLDRELINDYAPYSSSISIFEYHIAPNGDIANQLNDAAAIETTWQRRVTPLATITNLTSGGFSTEIVHQVLNNPTARTNLVNNIYDLVSTRGYGGVTIDFEQVSAADRDLFTGFLRQLRDRLQAGGYVLTIAVPAKTSDNIPWLRGYDYGGIGAVVNYMFIMAYDWHHAGSEPGPVAPITEIRRTIEFTIAQVPSRKIIIGVPLYGYDWIIPYQPGTVASAISNQNAIERAMRYQAPIQYSAEYQSPFFRYSDQQGRTHEVWFEDVRSMSRKMQIVREYRLQAIGAWQLTLGFTPGPWLLRKFFTIRKV</sequence>
<accession>O05495</accession>
<accession>Q797E8</accession>
<evidence type="ECO:0000255" key="1">
    <source>
        <dbReference type="PROSITE-ProRule" id="PRU01118"/>
    </source>
</evidence>
<evidence type="ECO:0000255" key="2">
    <source>
        <dbReference type="PROSITE-ProRule" id="PRU01258"/>
    </source>
</evidence>
<evidence type="ECO:0000269" key="3">
    <source>
    </source>
</evidence>
<evidence type="ECO:0000269" key="4">
    <source>
    </source>
</evidence>
<evidence type="ECO:0000305" key="5"/>
<evidence type="ECO:0000305" key="6">
    <source>
    </source>
</evidence>
<evidence type="ECO:0007829" key="7">
    <source>
        <dbReference type="PDB" id="3CZ8"/>
    </source>
</evidence>
<name>YDHD_BACSU</name>
<feature type="chain" id="PRO_0000227660" description="Putative sporulation-specific glycosylase YdhD">
    <location>
        <begin position="1"/>
        <end position="420"/>
    </location>
</feature>
<feature type="domain" description="LysM 1" evidence="1">
    <location>
        <begin position="2"/>
        <end position="45"/>
    </location>
</feature>
<feature type="domain" description="LysM 2" evidence="1">
    <location>
        <begin position="48"/>
        <end position="92"/>
    </location>
</feature>
<feature type="domain" description="GH18" evidence="2">
    <location>
        <begin position="100"/>
        <end position="420"/>
    </location>
</feature>
<feature type="active site" description="Proton donor" evidence="2">
    <location>
        <position position="212"/>
    </location>
</feature>
<feature type="strand" evidence="7">
    <location>
        <begin position="101"/>
        <end position="109"/>
    </location>
</feature>
<feature type="helix" evidence="7">
    <location>
        <begin position="111"/>
        <end position="113"/>
    </location>
</feature>
<feature type="strand" evidence="7">
    <location>
        <begin position="127"/>
        <end position="135"/>
    </location>
</feature>
<feature type="helix" evidence="7">
    <location>
        <begin position="148"/>
        <end position="156"/>
    </location>
</feature>
<feature type="strand" evidence="7">
    <location>
        <begin position="160"/>
        <end position="166"/>
    </location>
</feature>
<feature type="helix" evidence="7">
    <location>
        <begin position="175"/>
        <end position="182"/>
    </location>
</feature>
<feature type="helix" evidence="7">
    <location>
        <begin position="185"/>
        <end position="202"/>
    </location>
</feature>
<feature type="strand" evidence="7">
    <location>
        <begin position="205"/>
        <end position="210"/>
    </location>
</feature>
<feature type="helix" evidence="7">
    <location>
        <begin position="216"/>
        <end position="218"/>
    </location>
</feature>
<feature type="helix" evidence="7">
    <location>
        <begin position="219"/>
        <end position="235"/>
    </location>
</feature>
<feature type="strand" evidence="7">
    <location>
        <begin position="239"/>
        <end position="245"/>
    </location>
</feature>
<feature type="helix" evidence="7">
    <location>
        <begin position="253"/>
        <end position="255"/>
    </location>
</feature>
<feature type="helix" evidence="7">
    <location>
        <begin position="260"/>
        <end position="266"/>
    </location>
</feature>
<feature type="strand" evidence="7">
    <location>
        <begin position="268"/>
        <end position="273"/>
    </location>
</feature>
<feature type="helix" evidence="7">
    <location>
        <begin position="290"/>
        <end position="300"/>
    </location>
</feature>
<feature type="turn" evidence="7">
    <location>
        <begin position="301"/>
        <end position="303"/>
    </location>
</feature>
<feature type="helix" evidence="7">
    <location>
        <begin position="306"/>
        <end position="308"/>
    </location>
</feature>
<feature type="strand" evidence="7">
    <location>
        <begin position="309"/>
        <end position="312"/>
    </location>
</feature>
<feature type="strand" evidence="7">
    <location>
        <begin position="317"/>
        <end position="323"/>
    </location>
</feature>
<feature type="strand" evidence="7">
    <location>
        <begin position="331"/>
        <end position="333"/>
    </location>
</feature>
<feature type="helix" evidence="7">
    <location>
        <begin position="335"/>
        <end position="344"/>
    </location>
</feature>
<feature type="strand" evidence="7">
    <location>
        <begin position="350"/>
        <end position="352"/>
    </location>
</feature>
<feature type="turn" evidence="7">
    <location>
        <begin position="353"/>
        <end position="356"/>
    </location>
</feature>
<feature type="strand" evidence="7">
    <location>
        <begin position="357"/>
        <end position="363"/>
    </location>
</feature>
<feature type="strand" evidence="7">
    <location>
        <begin position="369"/>
        <end position="373"/>
    </location>
</feature>
<feature type="helix" evidence="7">
    <location>
        <begin position="377"/>
        <end position="389"/>
    </location>
</feature>
<feature type="strand" evidence="7">
    <location>
        <begin position="393"/>
        <end position="402"/>
    </location>
</feature>
<proteinExistence type="evidence at protein level"/>
<reference key="1">
    <citation type="journal article" date="1997" name="Microbiology">
        <title>Nucleotide sequence and analysis of the phoB-rrnE-groESL region of the Bacillus subtilis chromosome.</title>
        <authorList>
            <person name="Sadaie Y."/>
            <person name="Yata K."/>
            <person name="Fujita M."/>
            <person name="Sagai H."/>
            <person name="Itaya M."/>
            <person name="Kasahara Y."/>
            <person name="Ogasawara N."/>
        </authorList>
    </citation>
    <scope>NUCLEOTIDE SEQUENCE [GENOMIC DNA]</scope>
    <source>
        <strain>168 / JH642</strain>
    </source>
</reference>
<reference key="2">
    <citation type="journal article" date="1997" name="Nature">
        <title>The complete genome sequence of the Gram-positive bacterium Bacillus subtilis.</title>
        <authorList>
            <person name="Kunst F."/>
            <person name="Ogasawara N."/>
            <person name="Moszer I."/>
            <person name="Albertini A.M."/>
            <person name="Alloni G."/>
            <person name="Azevedo V."/>
            <person name="Bertero M.G."/>
            <person name="Bessieres P."/>
            <person name="Bolotin A."/>
            <person name="Borchert S."/>
            <person name="Borriss R."/>
            <person name="Boursier L."/>
            <person name="Brans A."/>
            <person name="Braun M."/>
            <person name="Brignell S.C."/>
            <person name="Bron S."/>
            <person name="Brouillet S."/>
            <person name="Bruschi C.V."/>
            <person name="Caldwell B."/>
            <person name="Capuano V."/>
            <person name="Carter N.M."/>
            <person name="Choi S.-K."/>
            <person name="Codani J.-J."/>
            <person name="Connerton I.F."/>
            <person name="Cummings N.J."/>
            <person name="Daniel R.A."/>
            <person name="Denizot F."/>
            <person name="Devine K.M."/>
            <person name="Duesterhoeft A."/>
            <person name="Ehrlich S.D."/>
            <person name="Emmerson P.T."/>
            <person name="Entian K.-D."/>
            <person name="Errington J."/>
            <person name="Fabret C."/>
            <person name="Ferrari E."/>
            <person name="Foulger D."/>
            <person name="Fritz C."/>
            <person name="Fujita M."/>
            <person name="Fujita Y."/>
            <person name="Fuma S."/>
            <person name="Galizzi A."/>
            <person name="Galleron N."/>
            <person name="Ghim S.-Y."/>
            <person name="Glaser P."/>
            <person name="Goffeau A."/>
            <person name="Golightly E.J."/>
            <person name="Grandi G."/>
            <person name="Guiseppi G."/>
            <person name="Guy B.J."/>
            <person name="Haga K."/>
            <person name="Haiech J."/>
            <person name="Harwood C.R."/>
            <person name="Henaut A."/>
            <person name="Hilbert H."/>
            <person name="Holsappel S."/>
            <person name="Hosono S."/>
            <person name="Hullo M.-F."/>
            <person name="Itaya M."/>
            <person name="Jones L.-M."/>
            <person name="Joris B."/>
            <person name="Karamata D."/>
            <person name="Kasahara Y."/>
            <person name="Klaerr-Blanchard M."/>
            <person name="Klein C."/>
            <person name="Kobayashi Y."/>
            <person name="Koetter P."/>
            <person name="Koningstein G."/>
            <person name="Krogh S."/>
            <person name="Kumano M."/>
            <person name="Kurita K."/>
            <person name="Lapidus A."/>
            <person name="Lardinois S."/>
            <person name="Lauber J."/>
            <person name="Lazarevic V."/>
            <person name="Lee S.-M."/>
            <person name="Levine A."/>
            <person name="Liu H."/>
            <person name="Masuda S."/>
            <person name="Mauel C."/>
            <person name="Medigue C."/>
            <person name="Medina N."/>
            <person name="Mellado R.P."/>
            <person name="Mizuno M."/>
            <person name="Moestl D."/>
            <person name="Nakai S."/>
            <person name="Noback M."/>
            <person name="Noone D."/>
            <person name="O'Reilly M."/>
            <person name="Ogawa K."/>
            <person name="Ogiwara A."/>
            <person name="Oudega B."/>
            <person name="Park S.-H."/>
            <person name="Parro V."/>
            <person name="Pohl T.M."/>
            <person name="Portetelle D."/>
            <person name="Porwollik S."/>
            <person name="Prescott A.M."/>
            <person name="Presecan E."/>
            <person name="Pujic P."/>
            <person name="Purnelle B."/>
            <person name="Rapoport G."/>
            <person name="Rey M."/>
            <person name="Reynolds S."/>
            <person name="Rieger M."/>
            <person name="Rivolta C."/>
            <person name="Rocha E."/>
            <person name="Roche B."/>
            <person name="Rose M."/>
            <person name="Sadaie Y."/>
            <person name="Sato T."/>
            <person name="Scanlan E."/>
            <person name="Schleich S."/>
            <person name="Schroeter R."/>
            <person name="Scoffone F."/>
            <person name="Sekiguchi J."/>
            <person name="Sekowska A."/>
            <person name="Seror S.J."/>
            <person name="Serror P."/>
            <person name="Shin B.-S."/>
            <person name="Soldo B."/>
            <person name="Sorokin A."/>
            <person name="Tacconi E."/>
            <person name="Takagi T."/>
            <person name="Takahashi H."/>
            <person name="Takemaru K."/>
            <person name="Takeuchi M."/>
            <person name="Tamakoshi A."/>
            <person name="Tanaka T."/>
            <person name="Terpstra P."/>
            <person name="Tognoni A."/>
            <person name="Tosato V."/>
            <person name="Uchiyama S."/>
            <person name="Vandenbol M."/>
            <person name="Vannier F."/>
            <person name="Vassarotti A."/>
            <person name="Viari A."/>
            <person name="Wambutt R."/>
            <person name="Wedler E."/>
            <person name="Wedler H."/>
            <person name="Weitzenegger T."/>
            <person name="Winters P."/>
            <person name="Wipat A."/>
            <person name="Yamamoto H."/>
            <person name="Yamane K."/>
            <person name="Yasumoto K."/>
            <person name="Yata K."/>
            <person name="Yoshida K."/>
            <person name="Yoshikawa H.-F."/>
            <person name="Zumstein E."/>
            <person name="Yoshikawa H."/>
            <person name="Danchin A."/>
        </authorList>
    </citation>
    <scope>NUCLEOTIDE SEQUENCE [LARGE SCALE GENOMIC DNA]</scope>
    <source>
        <strain>168</strain>
    </source>
</reference>
<reference key="3">
    <citation type="journal article" date="2009" name="Microbiology">
        <title>From a consortium sequence to a unified sequence: the Bacillus subtilis 168 reference genome a decade later.</title>
        <authorList>
            <person name="Barbe V."/>
            <person name="Cruveiller S."/>
            <person name="Kunst F."/>
            <person name="Lenoble P."/>
            <person name="Meurice G."/>
            <person name="Sekowska A."/>
            <person name="Vallenet D."/>
            <person name="Wang T."/>
            <person name="Moszer I."/>
            <person name="Medigue C."/>
            <person name="Danchin A."/>
        </authorList>
    </citation>
    <scope>SEQUENCE REVISION TO C-TERMINUS</scope>
</reference>
<reference key="4">
    <citation type="journal article" date="2000" name="J. Biochem.">
        <title>Synthesis and characterization of the spore proteins of Bacillus subtilis YdhD, YkuD, and YkvP, which carry a motif conserved among cell wall binding proteins.</title>
        <authorList>
            <person name="Kodama T."/>
            <person name="Takamatsu H."/>
            <person name="Asai K."/>
            <person name="Ogasawara N."/>
            <person name="Sadaie Y."/>
            <person name="Watabe K."/>
        </authorList>
    </citation>
    <scope>SUBCELLULAR LOCATION</scope>
    <scope>REGULATION</scope>
    <scope>DISRUPTION PHENOTYPE</scope>
    <scope>OVEREXPRESSION</scope>
    <source>
        <strain>168</strain>
    </source>
</reference>
<reference key="5">
    <citation type="journal article" date="2002" name="Microbiology">
        <title>Analysis of spore cortex lytic enzymes and related proteins in Bacillus subtilis endospore germination.</title>
        <authorList>
            <person name="Chirakkal H."/>
            <person name="O'Rourke M."/>
            <person name="Atrih A."/>
            <person name="Foster S.J."/>
            <person name="Moir A."/>
        </authorList>
    </citation>
    <scope>DISRUPTION PHENOTYPE</scope>
</reference>
<keyword id="KW-0002">3D-structure</keyword>
<keyword id="KW-0119">Carbohydrate metabolism</keyword>
<keyword id="KW-0326">Glycosidase</keyword>
<keyword id="KW-0378">Hydrolase</keyword>
<keyword id="KW-0624">Polysaccharide degradation</keyword>
<keyword id="KW-1185">Reference proteome</keyword>
<keyword id="KW-0677">Repeat</keyword>
<keyword id="KW-0749">Sporulation</keyword>
<organism>
    <name type="scientific">Bacillus subtilis (strain 168)</name>
    <dbReference type="NCBI Taxonomy" id="224308"/>
    <lineage>
        <taxon>Bacteria</taxon>
        <taxon>Bacillati</taxon>
        <taxon>Bacillota</taxon>
        <taxon>Bacilli</taxon>
        <taxon>Bacillales</taxon>
        <taxon>Bacillaceae</taxon>
        <taxon>Bacillus</taxon>
    </lineage>
</organism>
<dbReference type="EC" id="3.2.-.-"/>
<dbReference type="EMBL" id="D88802">
    <property type="protein sequence ID" value="BAA19695.1"/>
    <property type="status" value="ALT_FRAME"/>
    <property type="molecule type" value="Genomic_DNA"/>
</dbReference>
<dbReference type="EMBL" id="AL009126">
    <property type="protein sequence ID" value="CAB12390.2"/>
    <property type="molecule type" value="Genomic_DNA"/>
</dbReference>
<dbReference type="PIR" id="H69783">
    <property type="entry name" value="H69783"/>
</dbReference>
<dbReference type="RefSeq" id="WP_003234126.1">
    <property type="nucleotide sequence ID" value="NZ_OZ025638.1"/>
</dbReference>
<dbReference type="PDB" id="3CZ8">
    <property type="method" value="X-ray"/>
    <property type="resolution" value="2.20 A"/>
    <property type="chains" value="A/B=96-402"/>
</dbReference>
<dbReference type="PDBsum" id="3CZ8"/>
<dbReference type="SMR" id="O05495"/>
<dbReference type="FunCoup" id="O05495">
    <property type="interactions" value="145"/>
</dbReference>
<dbReference type="STRING" id="224308.BSU05710"/>
<dbReference type="CAZy" id="CBM50">
    <property type="family name" value="Carbohydrate-Binding Module Family 50"/>
</dbReference>
<dbReference type="CAZy" id="GH18">
    <property type="family name" value="Glycoside Hydrolase Family 18"/>
</dbReference>
<dbReference type="PaxDb" id="224308-BSU05710"/>
<dbReference type="DNASU" id="939885"/>
<dbReference type="EnsemblBacteria" id="CAB12390">
    <property type="protein sequence ID" value="CAB12390"/>
    <property type="gene ID" value="BSU_05710"/>
</dbReference>
<dbReference type="GeneID" id="939885"/>
<dbReference type="KEGG" id="bsu:BSU05710"/>
<dbReference type="PATRIC" id="fig|224308.179.peg.614"/>
<dbReference type="eggNOG" id="COG1388">
    <property type="taxonomic scope" value="Bacteria"/>
</dbReference>
<dbReference type="eggNOG" id="COG3858">
    <property type="taxonomic scope" value="Bacteria"/>
</dbReference>
<dbReference type="InParanoid" id="O05495"/>
<dbReference type="OrthoDB" id="9769314at2"/>
<dbReference type="PhylomeDB" id="O05495"/>
<dbReference type="BioCyc" id="BSUB:BSU05710-MONOMER"/>
<dbReference type="EvolutionaryTrace" id="O05495"/>
<dbReference type="Proteomes" id="UP000001570">
    <property type="component" value="Chromosome"/>
</dbReference>
<dbReference type="GO" id="GO:0031160">
    <property type="term" value="C:spore wall"/>
    <property type="evidence" value="ECO:0007669"/>
    <property type="project" value="UniProtKB-SubCell"/>
</dbReference>
<dbReference type="GO" id="GO:0008061">
    <property type="term" value="F:chitin binding"/>
    <property type="evidence" value="ECO:0007669"/>
    <property type="project" value="InterPro"/>
</dbReference>
<dbReference type="GO" id="GO:0016798">
    <property type="term" value="F:hydrolase activity, acting on glycosyl bonds"/>
    <property type="evidence" value="ECO:0007669"/>
    <property type="project" value="UniProtKB-KW"/>
</dbReference>
<dbReference type="GO" id="GO:0009313">
    <property type="term" value="P:oligosaccharide catabolic process"/>
    <property type="evidence" value="ECO:0000318"/>
    <property type="project" value="GO_Central"/>
</dbReference>
<dbReference type="GO" id="GO:0000272">
    <property type="term" value="P:polysaccharide catabolic process"/>
    <property type="evidence" value="ECO:0007669"/>
    <property type="project" value="UniProtKB-KW"/>
</dbReference>
<dbReference type="GO" id="GO:0030435">
    <property type="term" value="P:sporulation resulting in formation of a cellular spore"/>
    <property type="evidence" value="ECO:0007669"/>
    <property type="project" value="UniProtKB-KW"/>
</dbReference>
<dbReference type="CDD" id="cd02874">
    <property type="entry name" value="GH18_CFLE_spore_hydrolase"/>
    <property type="match status" value="1"/>
</dbReference>
<dbReference type="CDD" id="cd00118">
    <property type="entry name" value="LysM"/>
    <property type="match status" value="2"/>
</dbReference>
<dbReference type="Gene3D" id="3.10.50.10">
    <property type="match status" value="1"/>
</dbReference>
<dbReference type="Gene3D" id="3.20.20.80">
    <property type="entry name" value="Glycosidases"/>
    <property type="match status" value="1"/>
</dbReference>
<dbReference type="Gene3D" id="3.10.350.10">
    <property type="entry name" value="LysM domain"/>
    <property type="match status" value="2"/>
</dbReference>
<dbReference type="InterPro" id="IPR041704">
    <property type="entry name" value="CFLE_GH18"/>
</dbReference>
<dbReference type="InterPro" id="IPR011583">
    <property type="entry name" value="Chitinase_II/V-like_cat"/>
</dbReference>
<dbReference type="InterPro" id="IPR029070">
    <property type="entry name" value="Chitinase_insertion_sf"/>
</dbReference>
<dbReference type="InterPro" id="IPR051887">
    <property type="entry name" value="GH18_Domain-Containing"/>
</dbReference>
<dbReference type="InterPro" id="IPR001223">
    <property type="entry name" value="Glyco_hydro18_cat"/>
</dbReference>
<dbReference type="InterPro" id="IPR017853">
    <property type="entry name" value="Glycoside_hydrolase_SF"/>
</dbReference>
<dbReference type="InterPro" id="IPR018392">
    <property type="entry name" value="LysM_dom"/>
</dbReference>
<dbReference type="InterPro" id="IPR036779">
    <property type="entry name" value="LysM_dom_sf"/>
</dbReference>
<dbReference type="PANTHER" id="PTHR46290">
    <property type="entry name" value="DI-N-ACETYLCHITOBIASE"/>
    <property type="match status" value="1"/>
</dbReference>
<dbReference type="PANTHER" id="PTHR46290:SF1">
    <property type="entry name" value="DI-N-ACETYLCHITOBIASE"/>
    <property type="match status" value="1"/>
</dbReference>
<dbReference type="Pfam" id="PF00704">
    <property type="entry name" value="Glyco_hydro_18"/>
    <property type="match status" value="1"/>
</dbReference>
<dbReference type="Pfam" id="PF01476">
    <property type="entry name" value="LysM"/>
    <property type="match status" value="2"/>
</dbReference>
<dbReference type="SMART" id="SM00636">
    <property type="entry name" value="Glyco_18"/>
    <property type="match status" value="1"/>
</dbReference>
<dbReference type="SMART" id="SM00257">
    <property type="entry name" value="LysM"/>
    <property type="match status" value="2"/>
</dbReference>
<dbReference type="SUPFAM" id="SSF51445">
    <property type="entry name" value="(Trans)glycosidases"/>
    <property type="match status" value="1"/>
</dbReference>
<dbReference type="SUPFAM" id="SSF54106">
    <property type="entry name" value="LysM domain"/>
    <property type="match status" value="2"/>
</dbReference>
<dbReference type="PROSITE" id="PS51910">
    <property type="entry name" value="GH18_2"/>
    <property type="match status" value="1"/>
</dbReference>
<dbReference type="PROSITE" id="PS51782">
    <property type="entry name" value="LYSM"/>
    <property type="match status" value="2"/>
</dbReference>
<gene>
    <name type="primary">ydhD</name>
    <name type="ordered locus">BSU05710</name>
</gene>